<gene>
    <name evidence="1" type="primary">rplE</name>
    <name type="ordered locus">Helmi_13420</name>
    <name type="ORF">HM1_1390</name>
</gene>
<reference key="1">
    <citation type="journal article" date="2008" name="J. Bacteriol.">
        <title>The genome of Heliobacterium modesticaldum, a phototrophic representative of the Firmicutes containing the simplest photosynthetic apparatus.</title>
        <authorList>
            <person name="Sattley W.M."/>
            <person name="Madigan M.T."/>
            <person name="Swingley W.D."/>
            <person name="Cheung P.C."/>
            <person name="Clocksin K.M."/>
            <person name="Conrad A.L."/>
            <person name="Dejesa L.C."/>
            <person name="Honchak B.M."/>
            <person name="Jung D.O."/>
            <person name="Karbach L.E."/>
            <person name="Kurdoglu A."/>
            <person name="Lahiri S."/>
            <person name="Mastrian S.D."/>
            <person name="Page L.E."/>
            <person name="Taylor H.L."/>
            <person name="Wang Z.T."/>
            <person name="Raymond J."/>
            <person name="Chen M."/>
            <person name="Blankenship R.E."/>
            <person name="Touchman J.W."/>
        </authorList>
    </citation>
    <scope>NUCLEOTIDE SEQUENCE [LARGE SCALE GENOMIC DNA]</scope>
    <source>
        <strain>ATCC 51547 / Ice1</strain>
    </source>
</reference>
<accession>B0TC68</accession>
<comment type="function">
    <text evidence="1">This is one of the proteins that bind and probably mediate the attachment of the 5S RNA into the large ribosomal subunit, where it forms part of the central protuberance. In the 70S ribosome it contacts protein S13 of the 30S subunit (bridge B1b), connecting the 2 subunits; this bridge is implicated in subunit movement. Contacts the P site tRNA; the 5S rRNA and some of its associated proteins might help stabilize positioning of ribosome-bound tRNAs.</text>
</comment>
<comment type="subunit">
    <text evidence="1">Part of the 50S ribosomal subunit; part of the 5S rRNA/L5/L18/L25 subcomplex. Contacts the 5S rRNA and the P site tRNA. Forms a bridge to the 30S subunit in the 70S ribosome.</text>
</comment>
<comment type="similarity">
    <text evidence="1">Belongs to the universal ribosomal protein uL5 family.</text>
</comment>
<organism>
    <name type="scientific">Heliobacterium modesticaldum (strain ATCC 51547 / Ice1)</name>
    <dbReference type="NCBI Taxonomy" id="498761"/>
    <lineage>
        <taxon>Bacteria</taxon>
        <taxon>Bacillati</taxon>
        <taxon>Bacillota</taxon>
        <taxon>Clostridia</taxon>
        <taxon>Eubacteriales</taxon>
        <taxon>Heliobacteriaceae</taxon>
        <taxon>Heliomicrobium</taxon>
    </lineage>
</organism>
<evidence type="ECO:0000255" key="1">
    <source>
        <dbReference type="HAMAP-Rule" id="MF_01333"/>
    </source>
</evidence>
<evidence type="ECO:0000305" key="2"/>
<name>RL5_HELMI</name>
<dbReference type="EMBL" id="CP000930">
    <property type="protein sequence ID" value="ABZ83967.1"/>
    <property type="molecule type" value="Genomic_DNA"/>
</dbReference>
<dbReference type="RefSeq" id="WP_012282483.1">
    <property type="nucleotide sequence ID" value="NC_010337.2"/>
</dbReference>
<dbReference type="SMR" id="B0TC68"/>
<dbReference type="STRING" id="498761.HM1_1390"/>
<dbReference type="KEGG" id="hmo:HM1_1390"/>
<dbReference type="eggNOG" id="COG0094">
    <property type="taxonomic scope" value="Bacteria"/>
</dbReference>
<dbReference type="HOGENOM" id="CLU_061015_2_1_9"/>
<dbReference type="OrthoDB" id="9806626at2"/>
<dbReference type="Proteomes" id="UP000008550">
    <property type="component" value="Chromosome"/>
</dbReference>
<dbReference type="GO" id="GO:1990904">
    <property type="term" value="C:ribonucleoprotein complex"/>
    <property type="evidence" value="ECO:0007669"/>
    <property type="project" value="UniProtKB-KW"/>
</dbReference>
<dbReference type="GO" id="GO:0005840">
    <property type="term" value="C:ribosome"/>
    <property type="evidence" value="ECO:0007669"/>
    <property type="project" value="UniProtKB-KW"/>
</dbReference>
<dbReference type="GO" id="GO:0019843">
    <property type="term" value="F:rRNA binding"/>
    <property type="evidence" value="ECO:0007669"/>
    <property type="project" value="UniProtKB-UniRule"/>
</dbReference>
<dbReference type="GO" id="GO:0003735">
    <property type="term" value="F:structural constituent of ribosome"/>
    <property type="evidence" value="ECO:0007669"/>
    <property type="project" value="InterPro"/>
</dbReference>
<dbReference type="GO" id="GO:0000049">
    <property type="term" value="F:tRNA binding"/>
    <property type="evidence" value="ECO:0007669"/>
    <property type="project" value="UniProtKB-UniRule"/>
</dbReference>
<dbReference type="GO" id="GO:0006412">
    <property type="term" value="P:translation"/>
    <property type="evidence" value="ECO:0007669"/>
    <property type="project" value="UniProtKB-UniRule"/>
</dbReference>
<dbReference type="FunFam" id="3.30.1440.10:FF:000001">
    <property type="entry name" value="50S ribosomal protein L5"/>
    <property type="match status" value="1"/>
</dbReference>
<dbReference type="Gene3D" id="3.30.1440.10">
    <property type="match status" value="1"/>
</dbReference>
<dbReference type="HAMAP" id="MF_01333_B">
    <property type="entry name" value="Ribosomal_uL5_B"/>
    <property type="match status" value="1"/>
</dbReference>
<dbReference type="InterPro" id="IPR002132">
    <property type="entry name" value="Ribosomal_uL5"/>
</dbReference>
<dbReference type="InterPro" id="IPR020930">
    <property type="entry name" value="Ribosomal_uL5_bac-type"/>
</dbReference>
<dbReference type="InterPro" id="IPR031309">
    <property type="entry name" value="Ribosomal_uL5_C"/>
</dbReference>
<dbReference type="InterPro" id="IPR020929">
    <property type="entry name" value="Ribosomal_uL5_CS"/>
</dbReference>
<dbReference type="InterPro" id="IPR022803">
    <property type="entry name" value="Ribosomal_uL5_dom_sf"/>
</dbReference>
<dbReference type="InterPro" id="IPR031310">
    <property type="entry name" value="Ribosomal_uL5_N"/>
</dbReference>
<dbReference type="NCBIfam" id="NF000585">
    <property type="entry name" value="PRK00010.1"/>
    <property type="match status" value="1"/>
</dbReference>
<dbReference type="PANTHER" id="PTHR11994">
    <property type="entry name" value="60S RIBOSOMAL PROTEIN L11-RELATED"/>
    <property type="match status" value="1"/>
</dbReference>
<dbReference type="Pfam" id="PF00281">
    <property type="entry name" value="Ribosomal_L5"/>
    <property type="match status" value="1"/>
</dbReference>
<dbReference type="Pfam" id="PF00673">
    <property type="entry name" value="Ribosomal_L5_C"/>
    <property type="match status" value="1"/>
</dbReference>
<dbReference type="PIRSF" id="PIRSF002161">
    <property type="entry name" value="Ribosomal_L5"/>
    <property type="match status" value="1"/>
</dbReference>
<dbReference type="SUPFAM" id="SSF55282">
    <property type="entry name" value="RL5-like"/>
    <property type="match status" value="1"/>
</dbReference>
<dbReference type="PROSITE" id="PS00358">
    <property type="entry name" value="RIBOSOMAL_L5"/>
    <property type="match status" value="1"/>
</dbReference>
<keyword id="KW-1185">Reference proteome</keyword>
<keyword id="KW-0687">Ribonucleoprotein</keyword>
<keyword id="KW-0689">Ribosomal protein</keyword>
<keyword id="KW-0694">RNA-binding</keyword>
<keyword id="KW-0699">rRNA-binding</keyword>
<keyword id="KW-0820">tRNA-binding</keyword>
<feature type="chain" id="PRO_1000142408" description="Large ribosomal subunit protein uL5">
    <location>
        <begin position="1"/>
        <end position="180"/>
    </location>
</feature>
<protein>
    <recommendedName>
        <fullName evidence="1">Large ribosomal subunit protein uL5</fullName>
    </recommendedName>
    <alternativeName>
        <fullName evidence="2">50S ribosomal protein L5</fullName>
    </alternativeName>
</protein>
<proteinExistence type="inferred from homology"/>
<sequence>MARLKEKIQTDVNAAMMQRFGYKNVMQIPRLEKVVVNMGLGEAIQNPKGLDAAVGDLTRITGQKPVITTAKKSIAGFKLREGMKIGCKVTLRGDKMYDFVDKLVNLSLPRVRDFRGVSPKSFDGRGNYTLGLKEQLIFPEIEYDKIDRLRGMDVTFVTTAKTDEEARELLRLIGMPFRAE</sequence>